<dbReference type="EMBL" id="X07781">
    <property type="protein sequence ID" value="CAA30614.1"/>
    <property type="status" value="ALT_SEQ"/>
    <property type="molecule type" value="Genomic_DNA"/>
</dbReference>
<dbReference type="PIR" id="D32716">
    <property type="entry name" value="D32716"/>
</dbReference>
<dbReference type="PIR" id="S01854">
    <property type="entry name" value="HVRKC0"/>
</dbReference>
<dbReference type="SMR" id="P23088"/>
<dbReference type="GO" id="GO:0005886">
    <property type="term" value="C:plasma membrane"/>
    <property type="evidence" value="ECO:0007669"/>
    <property type="project" value="UniProtKB-SubCell"/>
</dbReference>
<dbReference type="CDD" id="cd00098">
    <property type="entry name" value="IgC1"/>
    <property type="match status" value="1"/>
</dbReference>
<dbReference type="CDD" id="cd21819">
    <property type="entry name" value="IgC1_CH1_IgM"/>
    <property type="match status" value="1"/>
</dbReference>
<dbReference type="CDD" id="cd05768">
    <property type="entry name" value="IgC1_CH3_IgAGD_CH4_IgAEM"/>
    <property type="match status" value="1"/>
</dbReference>
<dbReference type="FunFam" id="2.60.40.10:FF:000463">
    <property type="entry name" value="Immunoglobulin heavy constant gamma 1"/>
    <property type="match status" value="2"/>
</dbReference>
<dbReference type="Gene3D" id="2.60.40.10">
    <property type="entry name" value="Immunoglobulins"/>
    <property type="match status" value="4"/>
</dbReference>
<dbReference type="InterPro" id="IPR007110">
    <property type="entry name" value="Ig-like_dom"/>
</dbReference>
<dbReference type="InterPro" id="IPR036179">
    <property type="entry name" value="Ig-like_dom_sf"/>
</dbReference>
<dbReference type="InterPro" id="IPR013783">
    <property type="entry name" value="Ig-like_fold"/>
</dbReference>
<dbReference type="InterPro" id="IPR003006">
    <property type="entry name" value="Ig/MHC_CS"/>
</dbReference>
<dbReference type="InterPro" id="IPR003597">
    <property type="entry name" value="Ig_C1-set"/>
</dbReference>
<dbReference type="InterPro" id="IPR050380">
    <property type="entry name" value="Immune_Resp_Modulators"/>
</dbReference>
<dbReference type="PANTHER" id="PTHR23411">
    <property type="entry name" value="TAPASIN"/>
    <property type="match status" value="1"/>
</dbReference>
<dbReference type="Pfam" id="PF07654">
    <property type="entry name" value="C1-set"/>
    <property type="match status" value="4"/>
</dbReference>
<dbReference type="SMART" id="SM00407">
    <property type="entry name" value="IGc1"/>
    <property type="match status" value="4"/>
</dbReference>
<dbReference type="SUPFAM" id="SSF48726">
    <property type="entry name" value="Immunoglobulin"/>
    <property type="match status" value="4"/>
</dbReference>
<dbReference type="PROSITE" id="PS50835">
    <property type="entry name" value="IG_LIKE"/>
    <property type="match status" value="4"/>
</dbReference>
<dbReference type="PROSITE" id="PS00290">
    <property type="entry name" value="IG_MHC"/>
    <property type="match status" value="3"/>
</dbReference>
<protein>
    <recommendedName>
        <fullName>Ig heavy chain C region, membrane-bound form</fullName>
    </recommendedName>
    <alternativeName>
        <fullName>Clone 3050</fullName>
    </alternativeName>
</protein>
<keyword id="KW-1003">Cell membrane</keyword>
<keyword id="KW-0325">Glycoprotein</keyword>
<keyword id="KW-0393">Immunoglobulin domain</keyword>
<keyword id="KW-0472">Membrane</keyword>
<keyword id="KW-0812">Transmembrane</keyword>
<keyword id="KW-1133">Transmembrane helix</keyword>
<organism>
    <name type="scientific">Heterodontus francisci</name>
    <name type="common">Horn shark</name>
    <name type="synonym">Cestracion francisci</name>
    <dbReference type="NCBI Taxonomy" id="7792"/>
    <lineage>
        <taxon>Eukaryota</taxon>
        <taxon>Metazoa</taxon>
        <taxon>Chordata</taxon>
        <taxon>Craniata</taxon>
        <taxon>Vertebrata</taxon>
        <taxon>Chondrichthyes</taxon>
        <taxon>Elasmobranchii</taxon>
        <taxon>Galeomorphii</taxon>
        <taxon>Heterodontoidea</taxon>
        <taxon>Heterodontiformes</taxon>
        <taxon>Heterodontidae</taxon>
        <taxon>Heterodontus</taxon>
    </lineage>
</organism>
<accession>P23088</accession>
<comment type="subcellular location">
    <subcellularLocation>
        <location evidence="2">Cell membrane</location>
        <topology evidence="2">Single-pass membrane protein</topology>
    </subcellularLocation>
</comment>
<reference key="1">
    <citation type="journal article" date="1988" name="EMBO J.">
        <title>Complete structure and organization of immunoglobulin heavy chain constant region genes in a phylogenetically primitive vertebrate.</title>
        <authorList>
            <person name="Kokubu F."/>
            <person name="Hinds K."/>
            <person name="Litman R."/>
            <person name="Shamblott M.J."/>
            <person name="Litman G.W."/>
        </authorList>
    </citation>
    <scope>NUCLEOTIDE SEQUENCE [GENOMIC DNA]</scope>
    <source>
        <tissue>Spleen</tissue>
    </source>
</reference>
<evidence type="ECO:0000255" key="1"/>
<evidence type="ECO:0000305" key="2"/>
<proteinExistence type="predicted"/>
<feature type="chain" id="PRO_0000153633" description="Ig heavy chain C region, membrane-bound form">
    <location>
        <begin position="1" status="less than"/>
        <end position="461"/>
    </location>
</feature>
<feature type="transmembrane region" description="Helical" evidence="1">
    <location>
        <begin position="438"/>
        <end position="458"/>
    </location>
</feature>
<feature type="region of interest" description="CH1">
    <location>
        <begin position="1"/>
        <end position="99"/>
    </location>
</feature>
<feature type="region of interest" description="CH2">
    <location>
        <begin position="100"/>
        <end position="205"/>
    </location>
</feature>
<feature type="region of interest" description="CH3">
    <location>
        <begin position="206"/>
        <end position="308"/>
    </location>
</feature>
<feature type="region of interest" description="CH4">
    <location>
        <begin position="309"/>
        <end position="418"/>
    </location>
</feature>
<feature type="glycosylation site" description="N-linked (GlcNAc...) asparagine" evidence="1">
    <location>
        <position position="164"/>
    </location>
</feature>
<feature type="glycosylation site" description="N-linked (GlcNAc...) asparagine" evidence="1">
    <location>
        <position position="200"/>
    </location>
</feature>
<feature type="glycosylation site" description="N-linked (GlcNAc...) asparagine" evidence="1">
    <location>
        <position position="245"/>
    </location>
</feature>
<feature type="glycosylation site" description="N-linked (GlcNAc...) asparagine" evidence="1">
    <location>
        <position position="275"/>
    </location>
</feature>
<feature type="glycosylation site" description="N-linked (GlcNAc...) asparagine" evidence="1">
    <location>
        <position position="374"/>
    </location>
</feature>
<feature type="glycosylation site" description="N-linked (GlcNAc...) asparagine" evidence="1">
    <location>
        <position position="411"/>
    </location>
</feature>
<feature type="glycosylation site" description="N-linked (GlcNAc...) asparagine" evidence="1">
    <location>
        <position position="415"/>
    </location>
</feature>
<feature type="glycosylation site" description="N-linked (GlcNAc...) asparagine" evidence="1">
    <location>
        <position position="437"/>
    </location>
</feature>
<feature type="non-terminal residue">
    <location>
        <position position="1"/>
    </location>
</feature>
<name>HVCM_HETFR</name>
<sequence length="461" mass="50762">ATPSPPTLYGLCSCEQPNTDGSLAYGCLAMDYIPQITSVSWKKDNEPITTGLKTYPSVLNKKGTYTQSSQLTITESEVGSSKIYCEVRRGESVWIKEIPDCKGDKVHPTVILTQSSSEEITSRRFATVLCSIIDFHPESITVSWLKDGQHMESGFVTSPTCGVNGTFSATSRLTVPAREWFTNKVYTCQVSHQGVTQSRNITGSQVPCSCNDPVIKLLPPSIEQVLLEATVTLTCVVSNAPYGVNVSWTQEQKSLKSEIAVQPGEDADSVISTVNISTQAWLSGAEFYCVVNHQDLPTPLRASIHKEEVKDLREPSVSILLSPAEDVSAQRFLSLTCLVRGFFPREIFVKWTVNDKSVNPGNYKNTEVMAENDNSSYFIYSLLSIAAEEWASGASYSCVVGHEAIPLKIINRTVNKSSDSSDHIWIEDNEEESAIDNASTFIILFFLSIFYRAAVTLVKVK</sequence>